<organism>
    <name type="scientific">Vanderwaltozyma polyspora (strain ATCC 22028 / DSM 70294 / BCRC 21397 / CBS 2163 / NBRC 10782 / NRRL Y-8283 / UCD 57-17)</name>
    <name type="common">Kluyveromyces polysporus</name>
    <dbReference type="NCBI Taxonomy" id="436907"/>
    <lineage>
        <taxon>Eukaryota</taxon>
        <taxon>Fungi</taxon>
        <taxon>Dikarya</taxon>
        <taxon>Ascomycota</taxon>
        <taxon>Saccharomycotina</taxon>
        <taxon>Saccharomycetes</taxon>
        <taxon>Saccharomycetales</taxon>
        <taxon>Saccharomycetaceae</taxon>
        <taxon>Vanderwaltozyma</taxon>
    </lineage>
</organism>
<reference key="1">
    <citation type="journal article" date="2007" name="Proc. Natl. Acad. Sci. U.S.A.">
        <title>Independent sorting-out of thousands of duplicated gene pairs in two yeast species descended from a whole-genome duplication.</title>
        <authorList>
            <person name="Scannell D.R."/>
            <person name="Frank A.C."/>
            <person name="Conant G.C."/>
            <person name="Byrne K.P."/>
            <person name="Woolfit M."/>
            <person name="Wolfe K.H."/>
        </authorList>
    </citation>
    <scope>NUCLEOTIDE SEQUENCE [LARGE SCALE GENOMIC DNA]</scope>
    <source>
        <strain>ATCC 22028 / DSM 70294 / BCRC 21397 / CBS 2163 / NBRC 10782 / NRRL Y-8283 / UCD 57-17</strain>
    </source>
</reference>
<comment type="function">
    <text evidence="1">Component of the PAN1 actin cytoskeleton-regulatory complex required for the internalization of endosomes during actin-coupled endocytosis. The complex links the site of endocytosis to the cell membrane-associated actin cytoskeleton. Mediates uptake of external molecules and vacuolar degradation of plasma membrane proteins. Plays a role in the proper organization of the cell membrane-associated actin cytoskeleton and promotes its destabilization (By similarity).</text>
</comment>
<comment type="subunit">
    <text evidence="1">Component of the PAN1 actin cytoskeleton-regulatory complex.</text>
</comment>
<comment type="subcellular location">
    <subcellularLocation>
        <location evidence="1">Cell membrane</location>
        <topology evidence="1">Peripheral membrane protein</topology>
        <orientation evidence="1">Cytoplasmic side</orientation>
    </subcellularLocation>
    <subcellularLocation>
        <location evidence="1">Endosome membrane</location>
        <topology evidence="1">Peripheral membrane protein</topology>
        <orientation evidence="1">Cytoplasmic side</orientation>
    </subcellularLocation>
    <subcellularLocation>
        <location evidence="1">Cytoplasm</location>
        <location evidence="1">Cytoskeleton</location>
        <location evidence="1">Actin patch</location>
    </subcellularLocation>
    <text evidence="1">Cytoplasmic and cortical actin patches.</text>
</comment>
<comment type="similarity">
    <text evidence="4">Belongs to the SLA1 family.</text>
</comment>
<name>SLA1_VANPO</name>
<sequence length="1202" mass="131240">MTVFIGIYKAIYNYEPQTPDELTIQEDDLLYLLEKSNVDDWWTVKKRVIGSDIDEPAGLVPSNYVEVADVISQVKAVYDYHEVQNPDEELVFNENDTFDVYDDKDPDWILARSISTNQFGFIPGNYVEPLNAETGSAVPPSQPAAAAALPPPIATSATSPPAPALTAIDISTLPPPPQHSSKTNAQASDSGNRDYADKDLPDLPPNKPSRSNTETNEDDYYDAPPTKPARPNSTSNEQDTRQKARSRTSYYDQHYEDDAEDYRSSQRDDDYNDSEPSGELRTWNVAEIEGRKKRKAKLSIGNNRLFFSPQKGSPQDWSVDKLISYDNEKKHLFLEFVDPYKSLELHTGDNDTCKEILSVIGEIKGASRDPGFKEVEMASKSKKKGNVLYDFTAESNDELTIKQGQVVYIINDQKSKDWWLCELIDSGKRGVVPSHFIEPIQEKLTSSHTGGLFKSIKKFAKGGKSSKASDDAYSGSWEDDGMEGSTERRSRSGSYSTRKRASSTTSKKELPNPKKSRIWEDRSGTFKVEAQFIGCKEGKVHLHKANGVKIAVAAEKLSDDDLVYVERVTGFSLDKYKVRGSGTSSSRQDPRESERERRRRLRENDEKDRDRRLRERELNELQKARQLLDNERTKLQEQNEQPPSKPPRPSSGMGNRSRSQSTKDNYDWFEFFLNSGVDVSSCQRYTSNFEKERITEDMMVDINDSILRTLGLREGDIVRVMKYLDKKLGRDVSPQTAVVAGGMFSEADGSLKNNNSENQSSVGQQLLPNNPDLVSNTPIDDDTWTVRPAAKSEATLAPKTAEFTGSMQDLLDLKPLEPKKTEQLPIANLAVTESVVPEPNLKNLEPVRTGNVVQKPLANTLTGGATLVPLDPFKTGGNNVLPVTTGFVMMPFATGGAMPIQRTGGIIVPQTTFGTNAAGGIMPAQITGGLIPVATTGGLMPQTSFGVTPVANVVPLQRTGGAVMPIATTGGANILPQTTFNLPPSGTVLPIQRTANGLMAANTTGGMMPLNTTGGMMPLNTTGGMIPLNTTGGMMPMNTTGGVMSLQRTGGMMPQTSFGTQQMTGGAMNMMPQISFGAQQMTGGAMNVFPQTSFGAQQMTGGAMQNPNMGTMQNPNMGVMQNPNMGAFQPKSQFGMTLQRTGGAMAQPIMDAGVTGIAQGVQNMSMAQPLQNQPTGFGFGNGPQQPVQANIYNASASNPFGF</sequence>
<dbReference type="EMBL" id="DS480410">
    <property type="protein sequence ID" value="EDO17119.1"/>
    <property type="molecule type" value="Genomic_DNA"/>
</dbReference>
<dbReference type="RefSeq" id="XP_001644977.1">
    <property type="nucleotide sequence ID" value="XM_001644927.1"/>
</dbReference>
<dbReference type="SMR" id="A7TKW4"/>
<dbReference type="FunCoup" id="A7TKW4">
    <property type="interactions" value="177"/>
</dbReference>
<dbReference type="STRING" id="436907.A7TKW4"/>
<dbReference type="GeneID" id="5545314"/>
<dbReference type="KEGG" id="vpo:Kpol_1025p40"/>
<dbReference type="eggNOG" id="ENOG502QQC3">
    <property type="taxonomic scope" value="Eukaryota"/>
</dbReference>
<dbReference type="HOGENOM" id="CLU_003674_0_0_1"/>
<dbReference type="InParanoid" id="A7TKW4"/>
<dbReference type="OMA" id="FMAQGED"/>
<dbReference type="OrthoDB" id="26539at2759"/>
<dbReference type="PhylomeDB" id="A7TKW4"/>
<dbReference type="Proteomes" id="UP000000267">
    <property type="component" value="Unassembled WGS sequence"/>
</dbReference>
<dbReference type="GO" id="GO:0030479">
    <property type="term" value="C:actin cortical patch"/>
    <property type="evidence" value="ECO:0007669"/>
    <property type="project" value="UniProtKB-SubCell"/>
</dbReference>
<dbReference type="GO" id="GO:1990964">
    <property type="term" value="C:actin cytoskeleton-regulatory complex"/>
    <property type="evidence" value="ECO:0007669"/>
    <property type="project" value="EnsemblFungi"/>
</dbReference>
<dbReference type="GO" id="GO:0010008">
    <property type="term" value="C:endosome membrane"/>
    <property type="evidence" value="ECO:0007669"/>
    <property type="project" value="UniProtKB-SubCell"/>
</dbReference>
<dbReference type="GO" id="GO:0005634">
    <property type="term" value="C:nucleus"/>
    <property type="evidence" value="ECO:0007669"/>
    <property type="project" value="EnsemblFungi"/>
</dbReference>
<dbReference type="GO" id="GO:0005886">
    <property type="term" value="C:plasma membrane"/>
    <property type="evidence" value="ECO:0007669"/>
    <property type="project" value="UniProtKB-SubCell"/>
</dbReference>
<dbReference type="GO" id="GO:0140224">
    <property type="term" value="C:SLAC complex"/>
    <property type="evidence" value="ECO:0007669"/>
    <property type="project" value="EnsemblFungi"/>
</dbReference>
<dbReference type="GO" id="GO:0003779">
    <property type="term" value="F:actin binding"/>
    <property type="evidence" value="ECO:0007669"/>
    <property type="project" value="UniProtKB-KW"/>
</dbReference>
<dbReference type="GO" id="GO:0140312">
    <property type="term" value="F:cargo adaptor activity"/>
    <property type="evidence" value="ECO:0007669"/>
    <property type="project" value="EnsemblFungi"/>
</dbReference>
<dbReference type="GO" id="GO:0042802">
    <property type="term" value="F:identical protein binding"/>
    <property type="evidence" value="ECO:0007669"/>
    <property type="project" value="EnsemblFungi"/>
</dbReference>
<dbReference type="GO" id="GO:0043130">
    <property type="term" value="F:ubiquitin binding"/>
    <property type="evidence" value="ECO:0007669"/>
    <property type="project" value="EnsemblFungi"/>
</dbReference>
<dbReference type="GO" id="GO:0000147">
    <property type="term" value="P:actin cortical patch assembly"/>
    <property type="evidence" value="ECO:0007669"/>
    <property type="project" value="EnsemblFungi"/>
</dbReference>
<dbReference type="GO" id="GO:0071555">
    <property type="term" value="P:cell wall organization"/>
    <property type="evidence" value="ECO:0007669"/>
    <property type="project" value="EnsemblFungi"/>
</dbReference>
<dbReference type="GO" id="GO:0006897">
    <property type="term" value="P:endocytosis"/>
    <property type="evidence" value="ECO:0007669"/>
    <property type="project" value="UniProtKB-KW"/>
</dbReference>
<dbReference type="GO" id="GO:0034316">
    <property type="term" value="P:negative regulation of Arp2/3 complex-mediated actin nucleation"/>
    <property type="evidence" value="ECO:0007669"/>
    <property type="project" value="EnsemblFungi"/>
</dbReference>
<dbReference type="GO" id="GO:0030833">
    <property type="term" value="P:regulation of actin filament polymerization"/>
    <property type="evidence" value="ECO:0007669"/>
    <property type="project" value="TreeGrafter"/>
</dbReference>
<dbReference type="CDD" id="cd09532">
    <property type="entry name" value="SAM_SLA1_fungal"/>
    <property type="match status" value="1"/>
</dbReference>
<dbReference type="CDD" id="cd11773">
    <property type="entry name" value="SH3_Sla1p_1"/>
    <property type="match status" value="1"/>
</dbReference>
<dbReference type="CDD" id="cd11774">
    <property type="entry name" value="SH3_Sla1p_2"/>
    <property type="match status" value="1"/>
</dbReference>
<dbReference type="CDD" id="cd11775">
    <property type="entry name" value="SH3_Sla1p_3"/>
    <property type="match status" value="1"/>
</dbReference>
<dbReference type="FunFam" id="2.30.30.40:FF:000300">
    <property type="entry name" value="Actin cytoskeleton-regulatory complex protein SLA1"/>
    <property type="match status" value="1"/>
</dbReference>
<dbReference type="Gene3D" id="2.30.30.40">
    <property type="entry name" value="SH3 Domains"/>
    <property type="match status" value="3"/>
</dbReference>
<dbReference type="Gene3D" id="2.30.30.700">
    <property type="entry name" value="SLA1 homology domain 1"/>
    <property type="match status" value="1"/>
</dbReference>
<dbReference type="Gene3D" id="1.10.150.50">
    <property type="entry name" value="Transcription Factor, Ets-1"/>
    <property type="match status" value="1"/>
</dbReference>
<dbReference type="InterPro" id="IPR056996">
    <property type="entry name" value="PH_SLA1"/>
</dbReference>
<dbReference type="InterPro" id="IPR013761">
    <property type="entry name" value="SAM/pointed_sf"/>
</dbReference>
<dbReference type="InterPro" id="IPR036028">
    <property type="entry name" value="SH3-like_dom_sf"/>
</dbReference>
<dbReference type="InterPro" id="IPR001452">
    <property type="entry name" value="SH3_domain"/>
</dbReference>
<dbReference type="InterPro" id="IPR007131">
    <property type="entry name" value="SHD1"/>
</dbReference>
<dbReference type="InterPro" id="IPR035800">
    <property type="entry name" value="Sla1_SH3_1"/>
</dbReference>
<dbReference type="InterPro" id="IPR035821">
    <property type="entry name" value="Sla1_SH3_3"/>
</dbReference>
<dbReference type="PANTHER" id="PTHR15735:SF19">
    <property type="entry name" value="ACTIN CYTOSKELETON-REGULATORY COMPLEX PROTEIN SLA1"/>
    <property type="match status" value="1"/>
</dbReference>
<dbReference type="PANTHER" id="PTHR15735">
    <property type="entry name" value="FCH AND DOUBLE SH3 DOMAINS PROTEIN"/>
    <property type="match status" value="1"/>
</dbReference>
<dbReference type="Pfam" id="PF24081">
    <property type="entry name" value="PH_SLA1"/>
    <property type="match status" value="1"/>
</dbReference>
<dbReference type="Pfam" id="PF18017">
    <property type="entry name" value="SAM_4"/>
    <property type="match status" value="1"/>
</dbReference>
<dbReference type="Pfam" id="PF00018">
    <property type="entry name" value="SH3_1"/>
    <property type="match status" value="2"/>
</dbReference>
<dbReference type="Pfam" id="PF14604">
    <property type="entry name" value="SH3_9"/>
    <property type="match status" value="1"/>
</dbReference>
<dbReference type="Pfam" id="PF03983">
    <property type="entry name" value="SHD1"/>
    <property type="match status" value="1"/>
</dbReference>
<dbReference type="PRINTS" id="PR00452">
    <property type="entry name" value="SH3DOMAIN"/>
</dbReference>
<dbReference type="SMART" id="SM00326">
    <property type="entry name" value="SH3"/>
    <property type="match status" value="3"/>
</dbReference>
<dbReference type="SUPFAM" id="SSF50044">
    <property type="entry name" value="SH3-domain"/>
    <property type="match status" value="3"/>
</dbReference>
<dbReference type="PROSITE" id="PS50002">
    <property type="entry name" value="SH3"/>
    <property type="match status" value="3"/>
</dbReference>
<gene>
    <name type="primary">SLA1</name>
    <name type="ORF">Kpol_1025p40</name>
</gene>
<keyword id="KW-0009">Actin-binding</keyword>
<keyword id="KW-1003">Cell membrane</keyword>
<keyword id="KW-0963">Cytoplasm</keyword>
<keyword id="KW-0206">Cytoskeleton</keyword>
<keyword id="KW-0254">Endocytosis</keyword>
<keyword id="KW-0967">Endosome</keyword>
<keyword id="KW-0472">Membrane</keyword>
<keyword id="KW-1185">Reference proteome</keyword>
<keyword id="KW-0677">Repeat</keyword>
<keyword id="KW-0728">SH3 domain</keyword>
<accession>A7TKW4</accession>
<feature type="chain" id="PRO_0000349491" description="Actin cytoskeleton-regulatory complex protein SLA1">
    <location>
        <begin position="1"/>
        <end position="1202"/>
    </location>
</feature>
<feature type="domain" description="SH3 1" evidence="2">
    <location>
        <begin position="3"/>
        <end position="70"/>
    </location>
</feature>
<feature type="domain" description="SH3 2" evidence="2">
    <location>
        <begin position="71"/>
        <end position="132"/>
    </location>
</feature>
<feature type="domain" description="SH3 3" evidence="2">
    <location>
        <begin position="380"/>
        <end position="442"/>
    </location>
</feature>
<feature type="region of interest" description="Disordered" evidence="3">
    <location>
        <begin position="133"/>
        <end position="278"/>
    </location>
</feature>
<feature type="region of interest" description="Disordered" evidence="3">
    <location>
        <begin position="462"/>
        <end position="518"/>
    </location>
</feature>
<feature type="region of interest" description="Disordered" evidence="3">
    <location>
        <begin position="577"/>
        <end position="609"/>
    </location>
</feature>
<feature type="region of interest" description="Disordered" evidence="3">
    <location>
        <begin position="622"/>
        <end position="661"/>
    </location>
</feature>
<feature type="region of interest" description="Disordered" evidence="3">
    <location>
        <begin position="749"/>
        <end position="770"/>
    </location>
</feature>
<feature type="compositionally biased region" description="Low complexity" evidence="3">
    <location>
        <begin position="136"/>
        <end position="167"/>
    </location>
</feature>
<feature type="compositionally biased region" description="Polar residues" evidence="3">
    <location>
        <begin position="179"/>
        <end position="190"/>
    </location>
</feature>
<feature type="compositionally biased region" description="Basic and acidic residues" evidence="3">
    <location>
        <begin position="191"/>
        <end position="201"/>
    </location>
</feature>
<feature type="compositionally biased region" description="Basic and acidic residues" evidence="3">
    <location>
        <begin position="253"/>
        <end position="269"/>
    </location>
</feature>
<feature type="compositionally biased region" description="Basic and acidic residues" evidence="3">
    <location>
        <begin position="506"/>
        <end position="518"/>
    </location>
</feature>
<feature type="compositionally biased region" description="Basic and acidic residues" evidence="3">
    <location>
        <begin position="588"/>
        <end position="609"/>
    </location>
</feature>
<feature type="compositionally biased region" description="Basic and acidic residues" evidence="3">
    <location>
        <begin position="622"/>
        <end position="637"/>
    </location>
</feature>
<feature type="compositionally biased region" description="Polar residues" evidence="3">
    <location>
        <begin position="652"/>
        <end position="661"/>
    </location>
</feature>
<feature type="compositionally biased region" description="Polar residues" evidence="3">
    <location>
        <begin position="751"/>
        <end position="770"/>
    </location>
</feature>
<evidence type="ECO:0000250" key="1"/>
<evidence type="ECO:0000255" key="2">
    <source>
        <dbReference type="PROSITE-ProRule" id="PRU00192"/>
    </source>
</evidence>
<evidence type="ECO:0000256" key="3">
    <source>
        <dbReference type="SAM" id="MobiDB-lite"/>
    </source>
</evidence>
<evidence type="ECO:0000305" key="4"/>
<protein>
    <recommendedName>
        <fullName>Actin cytoskeleton-regulatory complex protein SLA1</fullName>
    </recommendedName>
</protein>
<proteinExistence type="inferred from homology"/>